<name>PG045_VACCC</name>
<protein>
    <recommendedName>
        <fullName>Apoptosis regulator OPG045</fullName>
    </recommendedName>
    <alternativeName>
        <fullName>Protein F1</fullName>
    </alternativeName>
</protein>
<accession>P68450</accession>
<accession>P21091</accession>
<gene>
    <name type="primary">OPG045</name>
    <name type="ORF">F1L</name>
</gene>
<keyword id="KW-1035">Host cytoplasm</keyword>
<keyword id="KW-1043">Host membrane</keyword>
<keyword id="KW-1045">Host mitochondrion</keyword>
<keyword id="KW-1047">Host mitochondrion outer membrane</keyword>
<keyword id="KW-0945">Host-virus interaction</keyword>
<keyword id="KW-1081">Inhibition of host apoptosis by viral BCL2-like protein</keyword>
<keyword id="KW-0472">Membrane</keyword>
<keyword id="KW-1119">Modulation of host cell apoptosis by virus</keyword>
<keyword id="KW-1185">Reference proteome</keyword>
<proteinExistence type="inferred from homology"/>
<comment type="function">
    <text evidence="2">Plays a role in evading host innate immune response by inhibiting host inflammasome activation. Interacts with and inhibits NLR-mediated interleukin-1 beta/IL1B production in infected cells. At the host mitochondria outer membrane, interacts with the BH3 domain of host BAK and prevents BAK from binding active BAX. In turn, host apoptosis is inhibited.</text>
</comment>
<comment type="subunit">
    <text evidence="1 2">Homodimer. Interacts with host pro-apoptotic protein BCL2L11 (via BH3 domain). Interacts with host NLRP1. Interacts with host BAK.</text>
</comment>
<comment type="subcellular location">
    <subcellularLocation>
        <location evidence="2">Host mitochondrion outer membrane</location>
    </subcellularLocation>
    <subcellularLocation>
        <location evidence="2">Host cytoplasm</location>
    </subcellularLocation>
</comment>
<comment type="induction">
    <text evidence="2">Expressed in the early phase of the viral replicative cycle.</text>
</comment>
<comment type="similarity">
    <text evidence="3">Belongs to the orthopoxvirus OPG045 family.</text>
</comment>
<feature type="chain" id="PRO_0000099473" description="Apoptosis regulator OPG045">
    <location>
        <begin position="1"/>
        <end position="226"/>
    </location>
</feature>
<organism>
    <name type="scientific">Vaccinia virus (strain Copenhagen)</name>
    <name type="common">VACV</name>
    <dbReference type="NCBI Taxonomy" id="10249"/>
    <lineage>
        <taxon>Viruses</taxon>
        <taxon>Varidnaviria</taxon>
        <taxon>Bamfordvirae</taxon>
        <taxon>Nucleocytoviricota</taxon>
        <taxon>Pokkesviricetes</taxon>
        <taxon>Chitovirales</taxon>
        <taxon>Poxviridae</taxon>
        <taxon>Chordopoxvirinae</taxon>
        <taxon>Orthopoxvirus</taxon>
        <taxon>Vaccinia virus</taxon>
    </lineage>
</organism>
<evidence type="ECO:0000250" key="1">
    <source>
        <dbReference type="UniProtKB" id="O57173"/>
    </source>
</evidence>
<evidence type="ECO:0000250" key="2">
    <source>
        <dbReference type="UniProtKB" id="P24356"/>
    </source>
</evidence>
<evidence type="ECO:0000305" key="3"/>
<sequence length="226" mass="26367">MLSMFMCNNIVDYVDDIDNGIVQDIEDEASNNVDHDYVYPLPENMVYRFDKSTNILDYLSTERDHVMMAVRYYMSKQRLDDLYRQLPTKTRSYIDIINIYCDKVSNDYNRDMNIMYDMASTKSFTVYDINNEVNTILMDNKGLGVRLATISFITELGRRCMNPVKTIKMFTLLSHTICDDCFVDYITDISPPDNTIPNTSTREYLKLIGITAIMFATYKTLKYMIG</sequence>
<reference key="1">
    <citation type="journal article" date="1990" name="Virology">
        <title>The complete DNA sequence of vaccinia virus.</title>
        <authorList>
            <person name="Goebel S.J."/>
            <person name="Johnson G.P."/>
            <person name="Perkus M.E."/>
            <person name="Davis S.W."/>
            <person name="Winslow J.P."/>
            <person name="Paoletti E."/>
        </authorList>
    </citation>
    <scope>NUCLEOTIDE SEQUENCE [LARGE SCALE GENOMIC DNA]</scope>
</reference>
<reference key="2">
    <citation type="journal article" date="1990" name="Virology">
        <title>Appendix to 'The complete DNA sequence of vaccinia virus'.</title>
        <authorList>
            <person name="Goebel S.J."/>
            <person name="Johnson G.P."/>
            <person name="Perkus M.E."/>
            <person name="Davis S.W."/>
            <person name="Winslow J.P."/>
            <person name="Paoletti E."/>
        </authorList>
    </citation>
    <scope>NUCLEOTIDE SEQUENCE [LARGE SCALE GENOMIC DNA]</scope>
</reference>
<dbReference type="EMBL" id="M35027">
    <property type="protein sequence ID" value="AAA48014.1"/>
    <property type="molecule type" value="Genomic_DNA"/>
</dbReference>
<dbReference type="PIR" id="F42506">
    <property type="entry name" value="F42506"/>
</dbReference>
<dbReference type="SMR" id="P68450"/>
<dbReference type="MEROPS" id="I91.001"/>
<dbReference type="Proteomes" id="UP000008269">
    <property type="component" value="Segment"/>
</dbReference>
<dbReference type="GO" id="GO:0044193">
    <property type="term" value="C:host cell mitochondrial outer membrane"/>
    <property type="evidence" value="ECO:0007669"/>
    <property type="project" value="UniProtKB-SubCell"/>
</dbReference>
<dbReference type="GO" id="GO:0016020">
    <property type="term" value="C:membrane"/>
    <property type="evidence" value="ECO:0007669"/>
    <property type="project" value="UniProtKB-KW"/>
</dbReference>
<dbReference type="GO" id="GO:0042981">
    <property type="term" value="P:regulation of apoptotic process"/>
    <property type="evidence" value="ECO:0007669"/>
    <property type="project" value="InterPro"/>
</dbReference>
<dbReference type="GO" id="GO:0033668">
    <property type="term" value="P:symbiont-mediated suppression of host apoptosis"/>
    <property type="evidence" value="ECO:0007669"/>
    <property type="project" value="UniProtKB-KW"/>
</dbReference>
<dbReference type="FunFam" id="1.10.437.10:FF:000013">
    <property type="entry name" value="Protein F1"/>
    <property type="match status" value="1"/>
</dbReference>
<dbReference type="Gene3D" id="1.10.437.10">
    <property type="entry name" value="Blc2-like"/>
    <property type="match status" value="1"/>
</dbReference>
<dbReference type="InterPro" id="IPR036834">
    <property type="entry name" value="Bcl-2-like_sf"/>
</dbReference>
<dbReference type="InterPro" id="IPR011207">
    <property type="entry name" value="Orthopox_F1"/>
</dbReference>
<dbReference type="InterPro" id="IPR021119">
    <property type="entry name" value="Poxvirus_F1/C10"/>
</dbReference>
<dbReference type="Pfam" id="PF11099">
    <property type="entry name" value="M11L"/>
    <property type="match status" value="1"/>
</dbReference>
<dbReference type="PIRSF" id="PIRSF015971">
    <property type="entry name" value="VAC_F1L"/>
    <property type="match status" value="1"/>
</dbReference>
<organismHost>
    <name type="scientific">Homo sapiens</name>
    <name type="common">Human</name>
    <dbReference type="NCBI Taxonomy" id="9606"/>
</organismHost>